<gene>
    <name type="primary">Tmem252</name>
</gene>
<dbReference type="EMBL" id="BC079347">
    <property type="protein sequence ID" value="AAH79347.1"/>
    <property type="molecule type" value="mRNA"/>
</dbReference>
<dbReference type="RefSeq" id="NP_001007739.1">
    <property type="nucleotide sequence ID" value="NM_001007738.1"/>
</dbReference>
<dbReference type="SMR" id="Q6AXS2"/>
<dbReference type="FunCoup" id="Q6AXS2">
    <property type="interactions" value="47"/>
</dbReference>
<dbReference type="STRING" id="10116.ENSRNOP00000030850"/>
<dbReference type="PhosphoSitePlus" id="Q6AXS2"/>
<dbReference type="PaxDb" id="10116-ENSRNOP00000030850"/>
<dbReference type="Ensembl" id="ENSRNOT00000035123.6">
    <property type="protein sequence ID" value="ENSRNOP00000030850.3"/>
    <property type="gene ID" value="ENSRNOG00000025476.6"/>
</dbReference>
<dbReference type="GeneID" id="361744"/>
<dbReference type="KEGG" id="rno:361744"/>
<dbReference type="UCSC" id="RGD:1359349">
    <property type="organism name" value="rat"/>
</dbReference>
<dbReference type="AGR" id="RGD:1359349"/>
<dbReference type="CTD" id="169693"/>
<dbReference type="RGD" id="1359349">
    <property type="gene designation" value="Tmem252"/>
</dbReference>
<dbReference type="eggNOG" id="ENOG502S6KQ">
    <property type="taxonomic scope" value="Eukaryota"/>
</dbReference>
<dbReference type="GeneTree" id="ENSGT00390000005250"/>
<dbReference type="HOGENOM" id="CLU_117690_0_0_1"/>
<dbReference type="InParanoid" id="Q6AXS2"/>
<dbReference type="OMA" id="LYTEMGL"/>
<dbReference type="OrthoDB" id="9896070at2759"/>
<dbReference type="PhylomeDB" id="Q6AXS2"/>
<dbReference type="TreeFam" id="TF337811"/>
<dbReference type="PRO" id="PR:Q6AXS2"/>
<dbReference type="Proteomes" id="UP000002494">
    <property type="component" value="Chromosome 1"/>
</dbReference>
<dbReference type="Bgee" id="ENSRNOG00000025476">
    <property type="expression patterns" value="Expressed in kidney and 18 other cell types or tissues"/>
</dbReference>
<dbReference type="GO" id="GO:0016020">
    <property type="term" value="C:membrane"/>
    <property type="evidence" value="ECO:0007669"/>
    <property type="project" value="UniProtKB-SubCell"/>
</dbReference>
<dbReference type="InterPro" id="IPR031363">
    <property type="entry name" value="TMEM252"/>
</dbReference>
<dbReference type="PANTHER" id="PTHR35682">
    <property type="entry name" value="TRANSMEMBRANE PROTEIN 252"/>
    <property type="match status" value="1"/>
</dbReference>
<dbReference type="PANTHER" id="PTHR35682:SF1">
    <property type="entry name" value="TRANSMEMBRANE PROTEIN 252"/>
    <property type="match status" value="1"/>
</dbReference>
<dbReference type="Pfam" id="PF15664">
    <property type="entry name" value="TMEM252"/>
    <property type="match status" value="1"/>
</dbReference>
<organism>
    <name type="scientific">Rattus norvegicus</name>
    <name type="common">Rat</name>
    <dbReference type="NCBI Taxonomy" id="10116"/>
    <lineage>
        <taxon>Eukaryota</taxon>
        <taxon>Metazoa</taxon>
        <taxon>Chordata</taxon>
        <taxon>Craniata</taxon>
        <taxon>Vertebrata</taxon>
        <taxon>Euteleostomi</taxon>
        <taxon>Mammalia</taxon>
        <taxon>Eutheria</taxon>
        <taxon>Euarchontoglires</taxon>
        <taxon>Glires</taxon>
        <taxon>Rodentia</taxon>
        <taxon>Myomorpha</taxon>
        <taxon>Muroidea</taxon>
        <taxon>Muridae</taxon>
        <taxon>Murinae</taxon>
        <taxon>Rattus</taxon>
    </lineage>
</organism>
<proteinExistence type="evidence at transcript level"/>
<feature type="chain" id="PRO_0000089710" description="Transmembrane protein 252">
    <location>
        <begin position="1"/>
        <end position="185"/>
    </location>
</feature>
<feature type="transmembrane region" description="Helical" evidence="1">
    <location>
        <begin position="8"/>
        <end position="28"/>
    </location>
</feature>
<feature type="transmembrane region" description="Helical" evidence="1">
    <location>
        <begin position="39"/>
        <end position="59"/>
    </location>
</feature>
<feature type="region of interest" description="Disordered" evidence="2">
    <location>
        <begin position="125"/>
        <end position="149"/>
    </location>
</feature>
<comment type="subcellular location">
    <subcellularLocation>
        <location evidence="3">Membrane</location>
        <topology evidence="3">Multi-pass membrane protein</topology>
    </subcellularLocation>
</comment>
<keyword id="KW-0472">Membrane</keyword>
<keyword id="KW-1185">Reference proteome</keyword>
<keyword id="KW-0812">Transmembrane</keyword>
<keyword id="KW-1133">Transmembrane helix</keyword>
<reference key="1">
    <citation type="journal article" date="2004" name="Genome Res.">
        <title>The status, quality, and expansion of the NIH full-length cDNA project: the Mammalian Gene Collection (MGC).</title>
        <authorList>
            <consortium name="The MGC Project Team"/>
        </authorList>
    </citation>
    <scope>NUCLEOTIDE SEQUENCE [LARGE SCALE MRNA]</scope>
    <source>
        <tissue>Kidney</tissue>
    </source>
</reference>
<evidence type="ECO:0000255" key="1"/>
<evidence type="ECO:0000256" key="2">
    <source>
        <dbReference type="SAM" id="MobiDB-lite"/>
    </source>
</evidence>
<evidence type="ECO:0000305" key="3"/>
<protein>
    <recommendedName>
        <fullName>Transmembrane protein 252</fullName>
    </recommendedName>
</protein>
<sequence>MQNRTGLVLCALSLLTGFLMICLGGFFISSSSSHSHRNLVVAYVLLPLGFVILLSGIFWGTYRQANDNKEMFNHVLRQHLAFQDLPLATVDRPDFYPPAYEESLDVEKQACSAGRGLLGFPPPLYTETSLEPQDKDKNDPQPEAPPPYPENIAVAAATVKTQDAEEPSTVLKAGAVLQLSELASC</sequence>
<accession>Q6AXS2</accession>
<name>TM252_RAT</name>